<evidence type="ECO:0000255" key="1">
    <source>
        <dbReference type="PROSITE-ProRule" id="PRU00434"/>
    </source>
</evidence>
<evidence type="ECO:0000305" key="2"/>
<gene>
    <name type="primary">yhcH</name>
    <name type="ordered locus">BSU09080</name>
</gene>
<name>YHCH_BACSU</name>
<organism>
    <name type="scientific">Bacillus subtilis (strain 168)</name>
    <dbReference type="NCBI Taxonomy" id="224308"/>
    <lineage>
        <taxon>Bacteria</taxon>
        <taxon>Bacillati</taxon>
        <taxon>Bacillota</taxon>
        <taxon>Bacilli</taxon>
        <taxon>Bacillales</taxon>
        <taxon>Bacillaceae</taxon>
        <taxon>Bacillus</taxon>
    </lineage>
</organism>
<comment type="similarity">
    <text evidence="2">Belongs to the ABC transporter superfamily.</text>
</comment>
<protein>
    <recommendedName>
        <fullName>Uncharacterized ABC transporter ATP-binding protein YhcH</fullName>
    </recommendedName>
</protein>
<reference key="1">
    <citation type="journal article" date="1996" name="Microbiology">
        <title>A 22 kb DNA sequence in the cspB-glpPFKD region at 75 degrees on the Bacillus subtilis chromosome.</title>
        <authorList>
            <person name="Noback M.A."/>
            <person name="Terpstra P."/>
            <person name="Holsappel S."/>
            <person name="Venema G."/>
            <person name="Bron S."/>
        </authorList>
    </citation>
    <scope>NUCLEOTIDE SEQUENCE [GENOMIC DNA]</scope>
    <source>
        <strain>168</strain>
    </source>
</reference>
<reference key="2">
    <citation type="journal article" date="1997" name="Nature">
        <title>The complete genome sequence of the Gram-positive bacterium Bacillus subtilis.</title>
        <authorList>
            <person name="Kunst F."/>
            <person name="Ogasawara N."/>
            <person name="Moszer I."/>
            <person name="Albertini A.M."/>
            <person name="Alloni G."/>
            <person name="Azevedo V."/>
            <person name="Bertero M.G."/>
            <person name="Bessieres P."/>
            <person name="Bolotin A."/>
            <person name="Borchert S."/>
            <person name="Borriss R."/>
            <person name="Boursier L."/>
            <person name="Brans A."/>
            <person name="Braun M."/>
            <person name="Brignell S.C."/>
            <person name="Bron S."/>
            <person name="Brouillet S."/>
            <person name="Bruschi C.V."/>
            <person name="Caldwell B."/>
            <person name="Capuano V."/>
            <person name="Carter N.M."/>
            <person name="Choi S.-K."/>
            <person name="Codani J.-J."/>
            <person name="Connerton I.F."/>
            <person name="Cummings N.J."/>
            <person name="Daniel R.A."/>
            <person name="Denizot F."/>
            <person name="Devine K.M."/>
            <person name="Duesterhoeft A."/>
            <person name="Ehrlich S.D."/>
            <person name="Emmerson P.T."/>
            <person name="Entian K.-D."/>
            <person name="Errington J."/>
            <person name="Fabret C."/>
            <person name="Ferrari E."/>
            <person name="Foulger D."/>
            <person name="Fritz C."/>
            <person name="Fujita M."/>
            <person name="Fujita Y."/>
            <person name="Fuma S."/>
            <person name="Galizzi A."/>
            <person name="Galleron N."/>
            <person name="Ghim S.-Y."/>
            <person name="Glaser P."/>
            <person name="Goffeau A."/>
            <person name="Golightly E.J."/>
            <person name="Grandi G."/>
            <person name="Guiseppi G."/>
            <person name="Guy B.J."/>
            <person name="Haga K."/>
            <person name="Haiech J."/>
            <person name="Harwood C.R."/>
            <person name="Henaut A."/>
            <person name="Hilbert H."/>
            <person name="Holsappel S."/>
            <person name="Hosono S."/>
            <person name="Hullo M.-F."/>
            <person name="Itaya M."/>
            <person name="Jones L.-M."/>
            <person name="Joris B."/>
            <person name="Karamata D."/>
            <person name="Kasahara Y."/>
            <person name="Klaerr-Blanchard M."/>
            <person name="Klein C."/>
            <person name="Kobayashi Y."/>
            <person name="Koetter P."/>
            <person name="Koningstein G."/>
            <person name="Krogh S."/>
            <person name="Kumano M."/>
            <person name="Kurita K."/>
            <person name="Lapidus A."/>
            <person name="Lardinois S."/>
            <person name="Lauber J."/>
            <person name="Lazarevic V."/>
            <person name="Lee S.-M."/>
            <person name="Levine A."/>
            <person name="Liu H."/>
            <person name="Masuda S."/>
            <person name="Mauel C."/>
            <person name="Medigue C."/>
            <person name="Medina N."/>
            <person name="Mellado R.P."/>
            <person name="Mizuno M."/>
            <person name="Moestl D."/>
            <person name="Nakai S."/>
            <person name="Noback M."/>
            <person name="Noone D."/>
            <person name="O'Reilly M."/>
            <person name="Ogawa K."/>
            <person name="Ogiwara A."/>
            <person name="Oudega B."/>
            <person name="Park S.-H."/>
            <person name="Parro V."/>
            <person name="Pohl T.M."/>
            <person name="Portetelle D."/>
            <person name="Porwollik S."/>
            <person name="Prescott A.M."/>
            <person name="Presecan E."/>
            <person name="Pujic P."/>
            <person name="Purnelle B."/>
            <person name="Rapoport G."/>
            <person name="Rey M."/>
            <person name="Reynolds S."/>
            <person name="Rieger M."/>
            <person name="Rivolta C."/>
            <person name="Rocha E."/>
            <person name="Roche B."/>
            <person name="Rose M."/>
            <person name="Sadaie Y."/>
            <person name="Sato T."/>
            <person name="Scanlan E."/>
            <person name="Schleich S."/>
            <person name="Schroeter R."/>
            <person name="Scoffone F."/>
            <person name="Sekiguchi J."/>
            <person name="Sekowska A."/>
            <person name="Seror S.J."/>
            <person name="Serror P."/>
            <person name="Shin B.-S."/>
            <person name="Soldo B."/>
            <person name="Sorokin A."/>
            <person name="Tacconi E."/>
            <person name="Takagi T."/>
            <person name="Takahashi H."/>
            <person name="Takemaru K."/>
            <person name="Takeuchi M."/>
            <person name="Tamakoshi A."/>
            <person name="Tanaka T."/>
            <person name="Terpstra P."/>
            <person name="Tognoni A."/>
            <person name="Tosato V."/>
            <person name="Uchiyama S."/>
            <person name="Vandenbol M."/>
            <person name="Vannier F."/>
            <person name="Vassarotti A."/>
            <person name="Viari A."/>
            <person name="Wambutt R."/>
            <person name="Wedler E."/>
            <person name="Wedler H."/>
            <person name="Weitzenegger T."/>
            <person name="Winters P."/>
            <person name="Wipat A."/>
            <person name="Yamamoto H."/>
            <person name="Yamane K."/>
            <person name="Yasumoto K."/>
            <person name="Yata K."/>
            <person name="Yoshida K."/>
            <person name="Yoshikawa H.-F."/>
            <person name="Zumstein E."/>
            <person name="Yoshikawa H."/>
            <person name="Danchin A."/>
        </authorList>
    </citation>
    <scope>NUCLEOTIDE SEQUENCE [LARGE SCALE GENOMIC DNA]</scope>
    <source>
        <strain>168</strain>
    </source>
</reference>
<sequence>MKTVLELKNVTKNIRGRTIIDDLSFTIREGEVFGFLGPNGAGKTTTIRMMVGLMKLSKGDVLICGQSITKEYAKAIKHIGAIVENPELYKFLSGYKNLQQFARMVKGVTKEKIDEVVELVGLTDRIHDKVKTYSLGMRQRLGLAQCLLHDPKVLILDEPTNGLDPAGIREIRDHLKKLTRERGMAVIVSSHLLSEMELMCDRIAILQKGKLIDIQNVKDENIDENDTYFFQVEQPSEAATVLNQYDLLSKTNGVEIKLAKEEVPAVIELLVMQQIRIYEVKVITKSLEDRFLEMTGETKEEVQHA</sequence>
<dbReference type="EMBL" id="X96983">
    <property type="protein sequence ID" value="CAA65691.1"/>
    <property type="molecule type" value="Genomic_DNA"/>
</dbReference>
<dbReference type="EMBL" id="AL009126">
    <property type="protein sequence ID" value="CAB12736.1"/>
    <property type="molecule type" value="Genomic_DNA"/>
</dbReference>
<dbReference type="PIR" id="D69822">
    <property type="entry name" value="D69822"/>
</dbReference>
<dbReference type="RefSeq" id="NP_388789.1">
    <property type="nucleotide sequence ID" value="NC_000964.3"/>
</dbReference>
<dbReference type="RefSeq" id="WP_003245448.1">
    <property type="nucleotide sequence ID" value="NZ_OZ025638.1"/>
</dbReference>
<dbReference type="SMR" id="P54592"/>
<dbReference type="FunCoup" id="P54592">
    <property type="interactions" value="598"/>
</dbReference>
<dbReference type="STRING" id="224308.BSU09080"/>
<dbReference type="PaxDb" id="224308-BSU09080"/>
<dbReference type="EnsemblBacteria" id="CAB12736">
    <property type="protein sequence ID" value="CAB12736"/>
    <property type="gene ID" value="BSU_09080"/>
</dbReference>
<dbReference type="GeneID" id="936229"/>
<dbReference type="KEGG" id="bsu:BSU09080"/>
<dbReference type="PATRIC" id="fig|224308.179.peg.981"/>
<dbReference type="eggNOG" id="COG1131">
    <property type="taxonomic scope" value="Bacteria"/>
</dbReference>
<dbReference type="InParanoid" id="P54592"/>
<dbReference type="OrthoDB" id="9804819at2"/>
<dbReference type="PhylomeDB" id="P54592"/>
<dbReference type="BioCyc" id="BSUB:BSU09080-MONOMER"/>
<dbReference type="Proteomes" id="UP000001570">
    <property type="component" value="Chromosome"/>
</dbReference>
<dbReference type="GO" id="GO:0005524">
    <property type="term" value="F:ATP binding"/>
    <property type="evidence" value="ECO:0007669"/>
    <property type="project" value="UniProtKB-KW"/>
</dbReference>
<dbReference type="GO" id="GO:0016887">
    <property type="term" value="F:ATP hydrolysis activity"/>
    <property type="evidence" value="ECO:0007669"/>
    <property type="project" value="InterPro"/>
</dbReference>
<dbReference type="Gene3D" id="3.40.50.300">
    <property type="entry name" value="P-loop containing nucleotide triphosphate hydrolases"/>
    <property type="match status" value="1"/>
</dbReference>
<dbReference type="InterPro" id="IPR003593">
    <property type="entry name" value="AAA+_ATPase"/>
</dbReference>
<dbReference type="InterPro" id="IPR003439">
    <property type="entry name" value="ABC_transporter-like_ATP-bd"/>
</dbReference>
<dbReference type="InterPro" id="IPR017871">
    <property type="entry name" value="ABC_transporter-like_CS"/>
</dbReference>
<dbReference type="InterPro" id="IPR027417">
    <property type="entry name" value="P-loop_NTPase"/>
</dbReference>
<dbReference type="PANTHER" id="PTHR43335">
    <property type="entry name" value="ABC TRANSPORTER, ATP-BINDING PROTEIN"/>
    <property type="match status" value="1"/>
</dbReference>
<dbReference type="PANTHER" id="PTHR43335:SF4">
    <property type="entry name" value="ABC TRANSPORTER, ATP-BINDING PROTEIN"/>
    <property type="match status" value="1"/>
</dbReference>
<dbReference type="Pfam" id="PF00005">
    <property type="entry name" value="ABC_tran"/>
    <property type="match status" value="1"/>
</dbReference>
<dbReference type="SMART" id="SM00382">
    <property type="entry name" value="AAA"/>
    <property type="match status" value="1"/>
</dbReference>
<dbReference type="SUPFAM" id="SSF52540">
    <property type="entry name" value="P-loop containing nucleoside triphosphate hydrolases"/>
    <property type="match status" value="1"/>
</dbReference>
<dbReference type="PROSITE" id="PS00211">
    <property type="entry name" value="ABC_TRANSPORTER_1"/>
    <property type="match status" value="1"/>
</dbReference>
<dbReference type="PROSITE" id="PS50893">
    <property type="entry name" value="ABC_TRANSPORTER_2"/>
    <property type="match status" value="1"/>
</dbReference>
<proteinExistence type="inferred from homology"/>
<accession>P54592</accession>
<keyword id="KW-0067">ATP-binding</keyword>
<keyword id="KW-0547">Nucleotide-binding</keyword>
<keyword id="KW-1185">Reference proteome</keyword>
<keyword id="KW-0813">Transport</keyword>
<feature type="chain" id="PRO_0000093143" description="Uncharacterized ABC transporter ATP-binding protein YhcH">
    <location>
        <begin position="1"/>
        <end position="305"/>
    </location>
</feature>
<feature type="domain" description="ABC transporter" evidence="1">
    <location>
        <begin position="5"/>
        <end position="233"/>
    </location>
</feature>
<feature type="binding site" evidence="1">
    <location>
        <begin position="37"/>
        <end position="44"/>
    </location>
    <ligand>
        <name>ATP</name>
        <dbReference type="ChEBI" id="CHEBI:30616"/>
    </ligand>
</feature>